<name>LCF1_SCHPO</name>
<keyword id="KW-0067">ATP-binding</keyword>
<keyword id="KW-0276">Fatty acid metabolism</keyword>
<keyword id="KW-0436">Ligase</keyword>
<keyword id="KW-0443">Lipid metabolism</keyword>
<keyword id="KW-0460">Magnesium</keyword>
<keyword id="KW-0547">Nucleotide-binding</keyword>
<keyword id="KW-1185">Reference proteome</keyword>
<comment type="function">
    <text evidence="1 4">Esterification, concomitant with transport, of exogenous long-chain fatty acids into metabolically active CoA thioesters for subsequent degradation or incorporation into phospholipids. It may supplement intracellular myristoyl-CoA pools from exogenous myristate. Preferentially acts on C12:0-C16:0 fatty acids with myristic and pentadecanic acid (C15:0) having the highest activities (By similarity). Appears to play a role in the maintenance of cell viability during stationary phase.</text>
</comment>
<comment type="catalytic activity">
    <reaction>
        <text>a long-chain fatty acid + ATP + CoA = a long-chain fatty acyl-CoA + AMP + diphosphate</text>
        <dbReference type="Rhea" id="RHEA:15421"/>
        <dbReference type="ChEBI" id="CHEBI:30616"/>
        <dbReference type="ChEBI" id="CHEBI:33019"/>
        <dbReference type="ChEBI" id="CHEBI:57287"/>
        <dbReference type="ChEBI" id="CHEBI:57560"/>
        <dbReference type="ChEBI" id="CHEBI:83139"/>
        <dbReference type="ChEBI" id="CHEBI:456215"/>
        <dbReference type="EC" id="6.2.1.3"/>
    </reaction>
</comment>
<comment type="cofactor">
    <cofactor evidence="1">
        <name>Mg(2+)</name>
        <dbReference type="ChEBI" id="CHEBI:18420"/>
    </cofactor>
</comment>
<comment type="domain">
    <text evidence="2">The FACS motif is required for catalytic activity and substrate specificity.</text>
</comment>
<comment type="similarity">
    <text evidence="5">Belongs to the ATP-dependent AMP-binding enzyme family.</text>
</comment>
<protein>
    <recommendedName>
        <fullName>Long-chain-fatty-acid--CoA ligase 1</fullName>
        <ecNumber>6.2.1.3</ecNumber>
    </recommendedName>
    <alternativeName>
        <fullName>Fatty acid activator 1</fullName>
    </alternativeName>
    <alternativeName>
        <fullName>Long-chain acyl-CoA synthetase 1</fullName>
    </alternativeName>
</protein>
<accession>O60135</accession>
<evidence type="ECO:0000250" key="1"/>
<evidence type="ECO:0000250" key="2">
    <source>
        <dbReference type="UniProtKB" id="P30624"/>
    </source>
</evidence>
<evidence type="ECO:0000250" key="3">
    <source>
        <dbReference type="UniProtKB" id="P69451"/>
    </source>
</evidence>
<evidence type="ECO:0000269" key="4">
    <source>
    </source>
</evidence>
<evidence type="ECO:0000305" key="5"/>
<proteinExistence type="inferred from homology"/>
<gene>
    <name type="primary">lcf1</name>
    <name type="ORF">SPBC18H10.02</name>
</gene>
<sequence length="676" mass="75966">MKVQSKAISKPKEHESAIYRNANFPDHLVETYSDDVHTLFDVFRHSVKQFGNKKAMGYRNLVKEHVETKMVTKVVDGEKKEVPKSWSYFELSDYNYLSFNDIYDKALRYAGALRKLGLNKGDKFELYAPTSAFWLLTAEACLSQSMTIVTAYDTLGEEGLLHSLRESGVRGMYTEGHLLKTLVNPLKEIESLEVIIYRNDAKEEDIKTIQEIRPNLKLIKFADFEKMSPPVEPDPPSPEEICCIMYTSGSTGLPKGVILSHKNMVAIVTAIVKHVPEVTSKDYLLAYLPLAHILEFAFENICLAWGGTIGYANVRTLVDTNCRNCKGDINTFRPTIMVGVPAVWEMVRKGIMSKLNAASAVKRSVFWTAYYTKAKLMRHNLPGSCVLDTAVFNKIRSMGTGGRLRYTLSGGSALSPDTKRFLSIVLCPMLIGYGLTEISAAAMVQNPACFNLDDSAGSLLPCTEMKLVDCEEGNYNSHGHPPRGEIWLRGPSLTRGYLNRDKENKESFTPDGWFRTGDVGELTPEGLLRIIDRKKNLVKTQNGEYIALEKLESRYRTSSLVSNICVYADQTKVKPLAIIVPNEPVVRKLATEQAGLSPDASWEEVCHNKKVRQLVYDDLIRIGRSHHFANIELIQNVVLVPIEFTPENGLVTAAQKLQRRKILDRFKKEIDAAYAE</sequence>
<reference key="1">
    <citation type="journal article" date="2003" name="Mol. Genet. Genomics">
        <title>A defect in a fatty acyl-CoA synthetase gene, lcf1+, results in a decrease in viability after entry into the stationary phase in fission yeast.</title>
        <authorList>
            <person name="Oshiro T."/>
            <person name="Aiba H."/>
            <person name="Mizuno T."/>
        </authorList>
    </citation>
    <scope>NUCLEOTIDE SEQUENCE [GENOMIC DNA]</scope>
    <scope>FUNCTION</scope>
</reference>
<reference key="2">
    <citation type="journal article" date="2002" name="Nature">
        <title>The genome sequence of Schizosaccharomyces pombe.</title>
        <authorList>
            <person name="Wood V."/>
            <person name="Gwilliam R."/>
            <person name="Rajandream M.A."/>
            <person name="Lyne M.H."/>
            <person name="Lyne R."/>
            <person name="Stewart A."/>
            <person name="Sgouros J.G."/>
            <person name="Peat N."/>
            <person name="Hayles J."/>
            <person name="Baker S.G."/>
            <person name="Basham D."/>
            <person name="Bowman S."/>
            <person name="Brooks K."/>
            <person name="Brown D."/>
            <person name="Brown S."/>
            <person name="Chillingworth T."/>
            <person name="Churcher C.M."/>
            <person name="Collins M."/>
            <person name="Connor R."/>
            <person name="Cronin A."/>
            <person name="Davis P."/>
            <person name="Feltwell T."/>
            <person name="Fraser A."/>
            <person name="Gentles S."/>
            <person name="Goble A."/>
            <person name="Hamlin N."/>
            <person name="Harris D.E."/>
            <person name="Hidalgo J."/>
            <person name="Hodgson G."/>
            <person name="Holroyd S."/>
            <person name="Hornsby T."/>
            <person name="Howarth S."/>
            <person name="Huckle E.J."/>
            <person name="Hunt S."/>
            <person name="Jagels K."/>
            <person name="James K.D."/>
            <person name="Jones L."/>
            <person name="Jones M."/>
            <person name="Leather S."/>
            <person name="McDonald S."/>
            <person name="McLean J."/>
            <person name="Mooney P."/>
            <person name="Moule S."/>
            <person name="Mungall K.L."/>
            <person name="Murphy L.D."/>
            <person name="Niblett D."/>
            <person name="Odell C."/>
            <person name="Oliver K."/>
            <person name="O'Neil S."/>
            <person name="Pearson D."/>
            <person name="Quail M.A."/>
            <person name="Rabbinowitsch E."/>
            <person name="Rutherford K.M."/>
            <person name="Rutter S."/>
            <person name="Saunders D."/>
            <person name="Seeger K."/>
            <person name="Sharp S."/>
            <person name="Skelton J."/>
            <person name="Simmonds M.N."/>
            <person name="Squares R."/>
            <person name="Squares S."/>
            <person name="Stevens K."/>
            <person name="Taylor K."/>
            <person name="Taylor R.G."/>
            <person name="Tivey A."/>
            <person name="Walsh S.V."/>
            <person name="Warren T."/>
            <person name="Whitehead S."/>
            <person name="Woodward J.R."/>
            <person name="Volckaert G."/>
            <person name="Aert R."/>
            <person name="Robben J."/>
            <person name="Grymonprez B."/>
            <person name="Weltjens I."/>
            <person name="Vanstreels E."/>
            <person name="Rieger M."/>
            <person name="Schaefer M."/>
            <person name="Mueller-Auer S."/>
            <person name="Gabel C."/>
            <person name="Fuchs M."/>
            <person name="Duesterhoeft A."/>
            <person name="Fritzc C."/>
            <person name="Holzer E."/>
            <person name="Moestl D."/>
            <person name="Hilbert H."/>
            <person name="Borzym K."/>
            <person name="Langer I."/>
            <person name="Beck A."/>
            <person name="Lehrach H."/>
            <person name="Reinhardt R."/>
            <person name="Pohl T.M."/>
            <person name="Eger P."/>
            <person name="Zimmermann W."/>
            <person name="Wedler H."/>
            <person name="Wambutt R."/>
            <person name="Purnelle B."/>
            <person name="Goffeau A."/>
            <person name="Cadieu E."/>
            <person name="Dreano S."/>
            <person name="Gloux S."/>
            <person name="Lelaure V."/>
            <person name="Mottier S."/>
            <person name="Galibert F."/>
            <person name="Aves S.J."/>
            <person name="Xiang Z."/>
            <person name="Hunt C."/>
            <person name="Moore K."/>
            <person name="Hurst S.M."/>
            <person name="Lucas M."/>
            <person name="Rochet M."/>
            <person name="Gaillardin C."/>
            <person name="Tallada V.A."/>
            <person name="Garzon A."/>
            <person name="Thode G."/>
            <person name="Daga R.R."/>
            <person name="Cruzado L."/>
            <person name="Jimenez J."/>
            <person name="Sanchez M."/>
            <person name="del Rey F."/>
            <person name="Benito J."/>
            <person name="Dominguez A."/>
            <person name="Revuelta J.L."/>
            <person name="Moreno S."/>
            <person name="Armstrong J."/>
            <person name="Forsburg S.L."/>
            <person name="Cerutti L."/>
            <person name="Lowe T."/>
            <person name="McCombie W.R."/>
            <person name="Paulsen I."/>
            <person name="Potashkin J."/>
            <person name="Shpakovski G.V."/>
            <person name="Ussery D."/>
            <person name="Barrell B.G."/>
            <person name="Nurse P."/>
        </authorList>
    </citation>
    <scope>NUCLEOTIDE SEQUENCE [LARGE SCALE GENOMIC DNA]</scope>
    <source>
        <strain>972 / ATCC 24843</strain>
    </source>
</reference>
<feature type="chain" id="PRO_0000193118" description="Long-chain-fatty-acid--CoA ligase 1">
    <location>
        <begin position="1"/>
        <end position="676"/>
    </location>
</feature>
<feature type="short sequence motif" description="FACS" evidence="2">
    <location>
        <begin position="511"/>
        <end position="560"/>
    </location>
</feature>
<feature type="binding site" evidence="3">
    <location>
        <begin position="246"/>
        <end position="257"/>
    </location>
    <ligand>
        <name>ATP</name>
        <dbReference type="ChEBI" id="CHEBI:30616"/>
    </ligand>
</feature>
<organism>
    <name type="scientific">Schizosaccharomyces pombe (strain 972 / ATCC 24843)</name>
    <name type="common">Fission yeast</name>
    <dbReference type="NCBI Taxonomy" id="284812"/>
    <lineage>
        <taxon>Eukaryota</taxon>
        <taxon>Fungi</taxon>
        <taxon>Dikarya</taxon>
        <taxon>Ascomycota</taxon>
        <taxon>Taphrinomycotina</taxon>
        <taxon>Schizosaccharomycetes</taxon>
        <taxon>Schizosaccharomycetales</taxon>
        <taxon>Schizosaccharomycetaceae</taxon>
        <taxon>Schizosaccharomyces</taxon>
    </lineage>
</organism>
<dbReference type="EC" id="6.2.1.3"/>
<dbReference type="EMBL" id="CU329671">
    <property type="protein sequence ID" value="CAA18399.1"/>
    <property type="molecule type" value="Genomic_DNA"/>
</dbReference>
<dbReference type="PIR" id="T39766">
    <property type="entry name" value="T39766"/>
</dbReference>
<dbReference type="RefSeq" id="NP_595726.1">
    <property type="nucleotide sequence ID" value="NM_001021624.2"/>
</dbReference>
<dbReference type="SMR" id="O60135"/>
<dbReference type="BioGRID" id="277254">
    <property type="interactions" value="7"/>
</dbReference>
<dbReference type="FunCoup" id="O60135">
    <property type="interactions" value="204"/>
</dbReference>
<dbReference type="STRING" id="284812.O60135"/>
<dbReference type="iPTMnet" id="O60135"/>
<dbReference type="PaxDb" id="4896-SPBC18H10.02.1"/>
<dbReference type="EnsemblFungi" id="SPBC18H10.02.1">
    <property type="protein sequence ID" value="SPBC18H10.02.1:pep"/>
    <property type="gene ID" value="SPBC18H10.02"/>
</dbReference>
<dbReference type="GeneID" id="2540731"/>
<dbReference type="KEGG" id="spo:2540731"/>
<dbReference type="PomBase" id="SPBC18H10.02">
    <property type="gene designation" value="lcf1"/>
</dbReference>
<dbReference type="VEuPathDB" id="FungiDB:SPBC18H10.02"/>
<dbReference type="eggNOG" id="KOG1180">
    <property type="taxonomic scope" value="Eukaryota"/>
</dbReference>
<dbReference type="HOGENOM" id="CLU_000022_45_2_1"/>
<dbReference type="InParanoid" id="O60135"/>
<dbReference type="OMA" id="RWEPVFH"/>
<dbReference type="PhylomeDB" id="O60135"/>
<dbReference type="Reactome" id="R-SPO-434313">
    <property type="pathway name" value="Intracellular metabolism of fatty acids regulates insulin secretion"/>
</dbReference>
<dbReference type="Reactome" id="R-SPO-75876">
    <property type="pathway name" value="Synthesis of very long-chain fatty acyl-CoAs"/>
</dbReference>
<dbReference type="PRO" id="PR:O60135"/>
<dbReference type="Proteomes" id="UP000002485">
    <property type="component" value="Chromosome II"/>
</dbReference>
<dbReference type="GO" id="GO:0005783">
    <property type="term" value="C:endoplasmic reticulum"/>
    <property type="evidence" value="ECO:0007005"/>
    <property type="project" value="PomBase"/>
</dbReference>
<dbReference type="GO" id="GO:0005811">
    <property type="term" value="C:lipid droplet"/>
    <property type="evidence" value="ECO:0000318"/>
    <property type="project" value="GO_Central"/>
</dbReference>
<dbReference type="GO" id="GO:0005886">
    <property type="term" value="C:plasma membrane"/>
    <property type="evidence" value="ECO:0000318"/>
    <property type="project" value="GO_Central"/>
</dbReference>
<dbReference type="GO" id="GO:0005524">
    <property type="term" value="F:ATP binding"/>
    <property type="evidence" value="ECO:0007669"/>
    <property type="project" value="UniProtKB-KW"/>
</dbReference>
<dbReference type="GO" id="GO:0016887">
    <property type="term" value="F:ATP hydrolysis activity"/>
    <property type="evidence" value="ECO:0000305"/>
    <property type="project" value="PomBase"/>
</dbReference>
<dbReference type="GO" id="GO:0004467">
    <property type="term" value="F:long-chain fatty acid-CoA ligase activity"/>
    <property type="evidence" value="ECO:0000318"/>
    <property type="project" value="GO_Central"/>
</dbReference>
<dbReference type="GO" id="GO:0090432">
    <property type="term" value="F:myristoyl-CoA ligase activity"/>
    <property type="evidence" value="ECO:0000315"/>
    <property type="project" value="PomBase"/>
</dbReference>
<dbReference type="GO" id="GO:0090434">
    <property type="term" value="F:oleoyl-CoA ligase activity"/>
    <property type="evidence" value="ECO:0000315"/>
    <property type="project" value="PomBase"/>
</dbReference>
<dbReference type="GO" id="GO:0090433">
    <property type="term" value="F:palmitoyl-CoA ligase activity"/>
    <property type="evidence" value="ECO:0000315"/>
    <property type="project" value="PomBase"/>
</dbReference>
<dbReference type="GO" id="GO:0001676">
    <property type="term" value="P:long-chain fatty acid metabolic process"/>
    <property type="evidence" value="ECO:0000318"/>
    <property type="project" value="GO_Central"/>
</dbReference>
<dbReference type="GO" id="GO:0035336">
    <property type="term" value="P:long-chain fatty-acyl-CoA metabolic process"/>
    <property type="evidence" value="ECO:0000315"/>
    <property type="project" value="PomBase"/>
</dbReference>
<dbReference type="CDD" id="cd17639">
    <property type="entry name" value="LC_FACS_euk1"/>
    <property type="match status" value="1"/>
</dbReference>
<dbReference type="Gene3D" id="3.40.50.12780">
    <property type="entry name" value="N-terminal domain of ligase-like"/>
    <property type="match status" value="1"/>
</dbReference>
<dbReference type="InterPro" id="IPR020845">
    <property type="entry name" value="AMP-binding_CS"/>
</dbReference>
<dbReference type="InterPro" id="IPR000873">
    <property type="entry name" value="AMP-dep_synth/lig_dom"/>
</dbReference>
<dbReference type="InterPro" id="IPR042099">
    <property type="entry name" value="ANL_N_sf"/>
</dbReference>
<dbReference type="PANTHER" id="PTHR43272:SF83">
    <property type="entry name" value="ACYL-COA SYNTHETASE LONG-CHAIN, ISOFORM J"/>
    <property type="match status" value="1"/>
</dbReference>
<dbReference type="PANTHER" id="PTHR43272">
    <property type="entry name" value="LONG-CHAIN-FATTY-ACID--COA LIGASE"/>
    <property type="match status" value="1"/>
</dbReference>
<dbReference type="Pfam" id="PF00501">
    <property type="entry name" value="AMP-binding"/>
    <property type="match status" value="1"/>
</dbReference>
<dbReference type="SUPFAM" id="SSF56801">
    <property type="entry name" value="Acetyl-CoA synthetase-like"/>
    <property type="match status" value="1"/>
</dbReference>
<dbReference type="PROSITE" id="PS00455">
    <property type="entry name" value="AMP_BINDING"/>
    <property type="match status" value="1"/>
</dbReference>